<name>HISZ_BACMK</name>
<protein>
    <recommendedName>
        <fullName evidence="1">ATP phosphoribosyltransferase regulatory subunit</fullName>
    </recommendedName>
</protein>
<sequence length="420" mass="48820">MTKWKRANPNGTRDYLFEECTLIEEVEQKLRRTFLERGYEEIRTPTIEFYDVFAFQNRPIDEEKMYKFFDEKGRIIVLRPDMTIPLARVIGTQRGDIPLKVTYSGNVFRANESLTGKYNEIVQSGIEIIGIENVRAEIECVISVIQALQKLKVQSFTIEIGQVQLYKCIVKKLPINDEEEKLLRTYIESKNYAALSHFIEEKKLNRCDETVRLLEKLPRLFGSLDVVEEAEKLASSNEMKMAIARVKEIYETIEQLGYGSYISIDLGMVQHLDYYTGVIFKGYIYEIGEEIVSGGRYDELIGNFGEMMPAVGLAVQVNQIVKALQEQQEPYKRKRIDIMIHYELNRLAEAERLRNLLQKDGKNAQLSLFSNLNDTFQFANKNKIMTVVEAKSESLVEYVWREKWIIQKEGEASCVTFKLR</sequence>
<keyword id="KW-0028">Amino-acid biosynthesis</keyword>
<keyword id="KW-0963">Cytoplasm</keyword>
<keyword id="KW-0368">Histidine biosynthesis</keyword>
<accession>A9VLH1</accession>
<comment type="function">
    <text evidence="1">Required for the first step of histidine biosynthesis. May allow the feedback regulation of ATP phosphoribosyltransferase activity by histidine.</text>
</comment>
<comment type="pathway">
    <text evidence="1">Amino-acid biosynthesis; L-histidine biosynthesis; L-histidine from 5-phospho-alpha-D-ribose 1-diphosphate: step 1/9.</text>
</comment>
<comment type="subunit">
    <text evidence="1">Heteromultimer composed of HisG and HisZ subunits.</text>
</comment>
<comment type="subcellular location">
    <subcellularLocation>
        <location evidence="1">Cytoplasm</location>
    </subcellularLocation>
</comment>
<comment type="miscellaneous">
    <text>This function is generally fulfilled by the C-terminal part of HisG, which is missing in some bacteria such as this one.</text>
</comment>
<comment type="similarity">
    <text evidence="1">Belongs to the class-II aminoacyl-tRNA synthetase family. HisZ subfamily.</text>
</comment>
<gene>
    <name evidence="1" type="primary">hisZ</name>
    <name type="ordered locus">BcerKBAB4_1326</name>
</gene>
<dbReference type="EMBL" id="CP000903">
    <property type="protein sequence ID" value="ABY42573.1"/>
    <property type="molecule type" value="Genomic_DNA"/>
</dbReference>
<dbReference type="RefSeq" id="WP_002140970.1">
    <property type="nucleotide sequence ID" value="NC_010184.1"/>
</dbReference>
<dbReference type="SMR" id="A9VLH1"/>
<dbReference type="KEGG" id="bwe:BcerKBAB4_1326"/>
<dbReference type="eggNOG" id="COG3705">
    <property type="taxonomic scope" value="Bacteria"/>
</dbReference>
<dbReference type="HOGENOM" id="CLU_025113_0_0_9"/>
<dbReference type="UniPathway" id="UPA00031">
    <property type="reaction ID" value="UER00006"/>
</dbReference>
<dbReference type="Proteomes" id="UP000002154">
    <property type="component" value="Chromosome"/>
</dbReference>
<dbReference type="GO" id="GO:0005737">
    <property type="term" value="C:cytoplasm"/>
    <property type="evidence" value="ECO:0007669"/>
    <property type="project" value="UniProtKB-SubCell"/>
</dbReference>
<dbReference type="GO" id="GO:0140096">
    <property type="term" value="F:catalytic activity, acting on a protein"/>
    <property type="evidence" value="ECO:0007669"/>
    <property type="project" value="UniProtKB-ARBA"/>
</dbReference>
<dbReference type="GO" id="GO:0004821">
    <property type="term" value="F:histidine-tRNA ligase activity"/>
    <property type="evidence" value="ECO:0007669"/>
    <property type="project" value="TreeGrafter"/>
</dbReference>
<dbReference type="GO" id="GO:0016740">
    <property type="term" value="F:transferase activity"/>
    <property type="evidence" value="ECO:0007669"/>
    <property type="project" value="UniProtKB-ARBA"/>
</dbReference>
<dbReference type="GO" id="GO:0006427">
    <property type="term" value="P:histidyl-tRNA aminoacylation"/>
    <property type="evidence" value="ECO:0007669"/>
    <property type="project" value="TreeGrafter"/>
</dbReference>
<dbReference type="GO" id="GO:0000105">
    <property type="term" value="P:L-histidine biosynthetic process"/>
    <property type="evidence" value="ECO:0007669"/>
    <property type="project" value="UniProtKB-UniRule"/>
</dbReference>
<dbReference type="CDD" id="cd00773">
    <property type="entry name" value="HisRS-like_core"/>
    <property type="match status" value="1"/>
</dbReference>
<dbReference type="Gene3D" id="3.30.930.10">
    <property type="entry name" value="Bira Bifunctional Protein, Domain 2"/>
    <property type="match status" value="1"/>
</dbReference>
<dbReference type="HAMAP" id="MF_00125">
    <property type="entry name" value="HisZ"/>
    <property type="match status" value="1"/>
</dbReference>
<dbReference type="InterPro" id="IPR006195">
    <property type="entry name" value="aa-tRNA-synth_II"/>
</dbReference>
<dbReference type="InterPro" id="IPR045864">
    <property type="entry name" value="aa-tRNA-synth_II/BPL/LPL"/>
</dbReference>
<dbReference type="InterPro" id="IPR041715">
    <property type="entry name" value="HisRS-like_core"/>
</dbReference>
<dbReference type="InterPro" id="IPR004516">
    <property type="entry name" value="HisRS/HisZ"/>
</dbReference>
<dbReference type="InterPro" id="IPR004517">
    <property type="entry name" value="HisZ"/>
</dbReference>
<dbReference type="NCBIfam" id="TIGR00443">
    <property type="entry name" value="hisZ_biosyn_reg"/>
    <property type="match status" value="1"/>
</dbReference>
<dbReference type="NCBIfam" id="NF008938">
    <property type="entry name" value="PRK12292.1-6"/>
    <property type="match status" value="1"/>
</dbReference>
<dbReference type="PANTHER" id="PTHR43707:SF6">
    <property type="entry name" value="ATP PHOSPHORIBOSYLTRANSFERASE REGULATORY SUBUNIT"/>
    <property type="match status" value="1"/>
</dbReference>
<dbReference type="PANTHER" id="PTHR43707">
    <property type="entry name" value="HISTIDYL-TRNA SYNTHETASE"/>
    <property type="match status" value="1"/>
</dbReference>
<dbReference type="Pfam" id="PF13393">
    <property type="entry name" value="tRNA-synt_His"/>
    <property type="match status" value="1"/>
</dbReference>
<dbReference type="PIRSF" id="PIRSF001549">
    <property type="entry name" value="His-tRNA_synth"/>
    <property type="match status" value="1"/>
</dbReference>
<dbReference type="SUPFAM" id="SSF55681">
    <property type="entry name" value="Class II aaRS and biotin synthetases"/>
    <property type="match status" value="1"/>
</dbReference>
<dbReference type="PROSITE" id="PS50862">
    <property type="entry name" value="AA_TRNA_LIGASE_II"/>
    <property type="match status" value="1"/>
</dbReference>
<evidence type="ECO:0000255" key="1">
    <source>
        <dbReference type="HAMAP-Rule" id="MF_00125"/>
    </source>
</evidence>
<feature type="chain" id="PRO_1000095444" description="ATP phosphoribosyltransferase regulatory subunit">
    <location>
        <begin position="1"/>
        <end position="420"/>
    </location>
</feature>
<reference key="1">
    <citation type="journal article" date="2008" name="Chem. Biol. Interact.">
        <title>Extending the Bacillus cereus group genomics to putative food-borne pathogens of different toxicity.</title>
        <authorList>
            <person name="Lapidus A."/>
            <person name="Goltsman E."/>
            <person name="Auger S."/>
            <person name="Galleron N."/>
            <person name="Segurens B."/>
            <person name="Dossat C."/>
            <person name="Land M.L."/>
            <person name="Broussolle V."/>
            <person name="Brillard J."/>
            <person name="Guinebretiere M.-H."/>
            <person name="Sanchis V."/>
            <person name="Nguen-the C."/>
            <person name="Lereclus D."/>
            <person name="Richardson P."/>
            <person name="Wincker P."/>
            <person name="Weissenbach J."/>
            <person name="Ehrlich S.D."/>
            <person name="Sorokin A."/>
        </authorList>
    </citation>
    <scope>NUCLEOTIDE SEQUENCE [LARGE SCALE GENOMIC DNA]</scope>
    <source>
        <strain>KBAB4</strain>
    </source>
</reference>
<organism>
    <name type="scientific">Bacillus mycoides (strain KBAB4)</name>
    <name type="common">Bacillus weihenstephanensis</name>
    <dbReference type="NCBI Taxonomy" id="315730"/>
    <lineage>
        <taxon>Bacteria</taxon>
        <taxon>Bacillati</taxon>
        <taxon>Bacillota</taxon>
        <taxon>Bacilli</taxon>
        <taxon>Bacillales</taxon>
        <taxon>Bacillaceae</taxon>
        <taxon>Bacillus</taxon>
        <taxon>Bacillus cereus group</taxon>
    </lineage>
</organism>
<proteinExistence type="inferred from homology"/>